<name>CMOB_CROS8</name>
<protein>
    <recommendedName>
        <fullName evidence="1">tRNA U34 carboxymethyltransferase</fullName>
        <ecNumber evidence="1">2.5.1.-</ecNumber>
    </recommendedName>
</protein>
<gene>
    <name evidence="1" type="primary">cmoB</name>
    <name type="ordered locus">ESA_01370</name>
</gene>
<comment type="function">
    <text evidence="1">Catalyzes carboxymethyl transfer from carboxy-S-adenosyl-L-methionine (Cx-SAM) to 5-hydroxyuridine (ho5U) to form 5-carboxymethoxyuridine (cmo5U) at position 34 in tRNAs.</text>
</comment>
<comment type="catalytic activity">
    <reaction evidence="1">
        <text>carboxy-S-adenosyl-L-methionine + 5-hydroxyuridine(34) in tRNA = 5-carboxymethoxyuridine(34) in tRNA + S-adenosyl-L-homocysteine + H(+)</text>
        <dbReference type="Rhea" id="RHEA:52848"/>
        <dbReference type="Rhea" id="RHEA-COMP:13381"/>
        <dbReference type="Rhea" id="RHEA-COMP:13383"/>
        <dbReference type="ChEBI" id="CHEBI:15378"/>
        <dbReference type="ChEBI" id="CHEBI:57856"/>
        <dbReference type="ChEBI" id="CHEBI:134278"/>
        <dbReference type="ChEBI" id="CHEBI:136877"/>
        <dbReference type="ChEBI" id="CHEBI:136879"/>
    </reaction>
</comment>
<comment type="subunit">
    <text evidence="1">Homotetramer.</text>
</comment>
<comment type="similarity">
    <text evidence="1">Belongs to the class I-like SAM-binding methyltransferase superfamily. CmoB family.</text>
</comment>
<organism>
    <name type="scientific">Cronobacter sakazakii (strain ATCC BAA-894)</name>
    <name type="common">Enterobacter sakazakii</name>
    <dbReference type="NCBI Taxonomy" id="290339"/>
    <lineage>
        <taxon>Bacteria</taxon>
        <taxon>Pseudomonadati</taxon>
        <taxon>Pseudomonadota</taxon>
        <taxon>Gammaproteobacteria</taxon>
        <taxon>Enterobacterales</taxon>
        <taxon>Enterobacteriaceae</taxon>
        <taxon>Cronobacter</taxon>
    </lineage>
</organism>
<evidence type="ECO:0000255" key="1">
    <source>
        <dbReference type="HAMAP-Rule" id="MF_01590"/>
    </source>
</evidence>
<accession>A7MEB0</accession>
<keyword id="KW-1185">Reference proteome</keyword>
<keyword id="KW-0808">Transferase</keyword>
<keyword id="KW-0819">tRNA processing</keyword>
<dbReference type="EC" id="2.5.1.-" evidence="1"/>
<dbReference type="EMBL" id="CP000783">
    <property type="protein sequence ID" value="ABU76630.1"/>
    <property type="molecule type" value="Genomic_DNA"/>
</dbReference>
<dbReference type="RefSeq" id="WP_012124455.1">
    <property type="nucleotide sequence ID" value="NC_009778.1"/>
</dbReference>
<dbReference type="SMR" id="A7MEB0"/>
<dbReference type="KEGG" id="esa:ESA_01370"/>
<dbReference type="PATRIC" id="fig|290339.8.peg.1214"/>
<dbReference type="HOGENOM" id="CLU_052665_0_0_6"/>
<dbReference type="Proteomes" id="UP000000260">
    <property type="component" value="Chromosome"/>
</dbReference>
<dbReference type="GO" id="GO:0008168">
    <property type="term" value="F:methyltransferase activity"/>
    <property type="evidence" value="ECO:0007669"/>
    <property type="project" value="TreeGrafter"/>
</dbReference>
<dbReference type="GO" id="GO:0016765">
    <property type="term" value="F:transferase activity, transferring alkyl or aryl (other than methyl) groups"/>
    <property type="evidence" value="ECO:0007669"/>
    <property type="project" value="UniProtKB-UniRule"/>
</dbReference>
<dbReference type="GO" id="GO:0002098">
    <property type="term" value="P:tRNA wobble uridine modification"/>
    <property type="evidence" value="ECO:0007669"/>
    <property type="project" value="InterPro"/>
</dbReference>
<dbReference type="CDD" id="cd02440">
    <property type="entry name" value="AdoMet_MTases"/>
    <property type="match status" value="1"/>
</dbReference>
<dbReference type="Gene3D" id="3.40.50.150">
    <property type="entry name" value="Vaccinia Virus protein VP39"/>
    <property type="match status" value="1"/>
</dbReference>
<dbReference type="HAMAP" id="MF_01590">
    <property type="entry name" value="tRNA_carboxymethyltr_CmoB"/>
    <property type="match status" value="1"/>
</dbReference>
<dbReference type="InterPro" id="IPR010017">
    <property type="entry name" value="CmoB"/>
</dbReference>
<dbReference type="InterPro" id="IPR027555">
    <property type="entry name" value="Mo5U34_MeTrfas-like"/>
</dbReference>
<dbReference type="InterPro" id="IPR029063">
    <property type="entry name" value="SAM-dependent_MTases_sf"/>
</dbReference>
<dbReference type="NCBIfam" id="NF011650">
    <property type="entry name" value="PRK15068.1"/>
    <property type="match status" value="1"/>
</dbReference>
<dbReference type="NCBIfam" id="TIGR00452">
    <property type="entry name" value="tRNA 5-methoxyuridine(34)/uridine 5-oxyacetic acid(34) synthase CmoB"/>
    <property type="match status" value="1"/>
</dbReference>
<dbReference type="PANTHER" id="PTHR43464">
    <property type="entry name" value="METHYLTRANSFERASE"/>
    <property type="match status" value="1"/>
</dbReference>
<dbReference type="PANTHER" id="PTHR43464:SF95">
    <property type="entry name" value="TRNA U34 CARBOXYMETHYLTRANSFERASE"/>
    <property type="match status" value="1"/>
</dbReference>
<dbReference type="Pfam" id="PF08003">
    <property type="entry name" value="Methyltransf_9"/>
    <property type="match status" value="1"/>
</dbReference>
<dbReference type="SUPFAM" id="SSF53335">
    <property type="entry name" value="S-adenosyl-L-methionine-dependent methyltransferases"/>
    <property type="match status" value="1"/>
</dbReference>
<sequence length="323" mass="36448">MIDFGKFYQQIACGPLAHWLETLPAQVAAWQRDALHGQFKQWKNSLDNLPALVPDQLDLLHSVSAQSAEPLSDGQRKRIEQLLRTLMPWRKGPFSLYGIDIDTEWRSDLKWDRVLPHITPLAGRTILDVGCGSGYHLWRMVGAGAQLAVGIDPTQLFLCQFEAVRKLLGGDNRAHVLPLGIEQMPALNAFDTVFSMGVLYHRRSPLDHLWQLKDQLVKDGELVLETLVVEGDENTVLVPGERYAQMRNVYFIPSAAALKNWLEKCGFVDVKIADFSVTTVEEQRRTAWMETESLADFLDPHDATKTREGYPAPLRAVLVARKP</sequence>
<feature type="chain" id="PRO_0000313913" description="tRNA U34 carboxymethyltransferase">
    <location>
        <begin position="1"/>
        <end position="323"/>
    </location>
</feature>
<feature type="binding site" evidence="1">
    <location>
        <position position="91"/>
    </location>
    <ligand>
        <name>carboxy-S-adenosyl-L-methionine</name>
        <dbReference type="ChEBI" id="CHEBI:134278"/>
    </ligand>
</feature>
<feature type="binding site" evidence="1">
    <location>
        <position position="105"/>
    </location>
    <ligand>
        <name>carboxy-S-adenosyl-L-methionine</name>
        <dbReference type="ChEBI" id="CHEBI:134278"/>
    </ligand>
</feature>
<feature type="binding site" evidence="1">
    <location>
        <position position="110"/>
    </location>
    <ligand>
        <name>carboxy-S-adenosyl-L-methionine</name>
        <dbReference type="ChEBI" id="CHEBI:134278"/>
    </ligand>
</feature>
<feature type="binding site" evidence="1">
    <location>
        <position position="130"/>
    </location>
    <ligand>
        <name>carboxy-S-adenosyl-L-methionine</name>
        <dbReference type="ChEBI" id="CHEBI:134278"/>
    </ligand>
</feature>
<feature type="binding site" evidence="1">
    <location>
        <begin position="152"/>
        <end position="154"/>
    </location>
    <ligand>
        <name>carboxy-S-adenosyl-L-methionine</name>
        <dbReference type="ChEBI" id="CHEBI:134278"/>
    </ligand>
</feature>
<feature type="binding site" evidence="1">
    <location>
        <begin position="181"/>
        <end position="182"/>
    </location>
    <ligand>
        <name>carboxy-S-adenosyl-L-methionine</name>
        <dbReference type="ChEBI" id="CHEBI:134278"/>
    </ligand>
</feature>
<feature type="binding site" evidence="1">
    <location>
        <position position="196"/>
    </location>
    <ligand>
        <name>carboxy-S-adenosyl-L-methionine</name>
        <dbReference type="ChEBI" id="CHEBI:134278"/>
    </ligand>
</feature>
<feature type="binding site" evidence="1">
    <location>
        <position position="200"/>
    </location>
    <ligand>
        <name>carboxy-S-adenosyl-L-methionine</name>
        <dbReference type="ChEBI" id="CHEBI:134278"/>
    </ligand>
</feature>
<feature type="binding site" evidence="1">
    <location>
        <position position="315"/>
    </location>
    <ligand>
        <name>carboxy-S-adenosyl-L-methionine</name>
        <dbReference type="ChEBI" id="CHEBI:134278"/>
    </ligand>
</feature>
<reference key="1">
    <citation type="journal article" date="2010" name="PLoS ONE">
        <title>Genome sequence of Cronobacter sakazakii BAA-894 and comparative genomic hybridization analysis with other Cronobacter species.</title>
        <authorList>
            <person name="Kucerova E."/>
            <person name="Clifton S.W."/>
            <person name="Xia X.Q."/>
            <person name="Long F."/>
            <person name="Porwollik S."/>
            <person name="Fulton L."/>
            <person name="Fronick C."/>
            <person name="Minx P."/>
            <person name="Kyung K."/>
            <person name="Warren W."/>
            <person name="Fulton R."/>
            <person name="Feng D."/>
            <person name="Wollam A."/>
            <person name="Shah N."/>
            <person name="Bhonagiri V."/>
            <person name="Nash W.E."/>
            <person name="Hallsworth-Pepin K."/>
            <person name="Wilson R.K."/>
            <person name="McClelland M."/>
            <person name="Forsythe S.J."/>
        </authorList>
    </citation>
    <scope>NUCLEOTIDE SEQUENCE [LARGE SCALE GENOMIC DNA]</scope>
    <source>
        <strain>ATCC BAA-894</strain>
    </source>
</reference>
<proteinExistence type="inferred from homology"/>